<reference key="1">
    <citation type="journal article" date="1998" name="Mech. Dev.">
        <title>Six3, a medaka homologue of the Drosophila homeobox gene sine oculis is expressed in the anterior embryonic shield and the developing eye.</title>
        <authorList>
            <person name="Loosli F."/>
            <person name="Koester R.W."/>
            <person name="Carl M."/>
            <person name="Krone A."/>
            <person name="Wittbrodt J."/>
        </authorList>
    </citation>
    <scope>NUCLEOTIDE SEQUENCE [MRNA]</scope>
    <source>
        <strain>Carolina Biological</strain>
    </source>
</reference>
<dbReference type="EMBL" id="AJ000938">
    <property type="protein sequence ID" value="CAA04395.1"/>
    <property type="molecule type" value="mRNA"/>
</dbReference>
<dbReference type="RefSeq" id="XP_020570431.1">
    <property type="nucleotide sequence ID" value="XM_020714772.2"/>
</dbReference>
<dbReference type="RefSeq" id="XP_020570436.1">
    <property type="nucleotide sequence ID" value="XM_020714777.2"/>
</dbReference>
<dbReference type="RefSeq" id="XP_023809292.1">
    <property type="nucleotide sequence ID" value="XM_023953524.1"/>
</dbReference>
<dbReference type="BMRB" id="O73917"/>
<dbReference type="SMR" id="O73917"/>
<dbReference type="FunCoup" id="O73917">
    <property type="interactions" value="215"/>
</dbReference>
<dbReference type="STRING" id="8090.ENSORLP00000012434"/>
<dbReference type="Ensembl" id="ENSORLT00000012436.2">
    <property type="protein sequence ID" value="ENSORLP00000012435.2"/>
    <property type="gene ID" value="ENSORLG00000009913.2"/>
</dbReference>
<dbReference type="Ensembl" id="ENSORLT00020008405.1">
    <property type="protein sequence ID" value="ENSORLP00020004175.1"/>
    <property type="gene ID" value="ENSORLG00020005018.1"/>
</dbReference>
<dbReference type="GeneID" id="100049356"/>
<dbReference type="eggNOG" id="KOG0849">
    <property type="taxonomic scope" value="Eukaryota"/>
</dbReference>
<dbReference type="GeneTree" id="ENSGT00940000155391"/>
<dbReference type="InParanoid" id="O73917"/>
<dbReference type="OrthoDB" id="3225452at2759"/>
<dbReference type="Proteomes" id="UP000001038">
    <property type="component" value="Chromosome 3"/>
</dbReference>
<dbReference type="Proteomes" id="UP000265180">
    <property type="component" value="Chromosome 3"/>
</dbReference>
<dbReference type="Proteomes" id="UP000265200">
    <property type="component" value="Unplaced"/>
</dbReference>
<dbReference type="Bgee" id="ENSORLG00000009913">
    <property type="expression patterns" value="Expressed in sexually immature organism and 5 other cell types or tissues"/>
</dbReference>
<dbReference type="GO" id="GO:0005634">
    <property type="term" value="C:nucleus"/>
    <property type="evidence" value="ECO:0007669"/>
    <property type="project" value="UniProtKB-SubCell"/>
</dbReference>
<dbReference type="GO" id="GO:0000981">
    <property type="term" value="F:DNA-binding transcription factor activity, RNA polymerase II-specific"/>
    <property type="evidence" value="ECO:0000318"/>
    <property type="project" value="GO_Central"/>
</dbReference>
<dbReference type="GO" id="GO:0000978">
    <property type="term" value="F:RNA polymerase II cis-regulatory region sequence-specific DNA binding"/>
    <property type="evidence" value="ECO:0000318"/>
    <property type="project" value="GO_Central"/>
</dbReference>
<dbReference type="GO" id="GO:0007420">
    <property type="term" value="P:brain development"/>
    <property type="evidence" value="ECO:0000318"/>
    <property type="project" value="GO_Central"/>
</dbReference>
<dbReference type="GO" id="GO:0030900">
    <property type="term" value="P:forebrain development"/>
    <property type="evidence" value="ECO:0000318"/>
    <property type="project" value="GO_Central"/>
</dbReference>
<dbReference type="GO" id="GO:0006357">
    <property type="term" value="P:regulation of transcription by RNA polymerase II"/>
    <property type="evidence" value="ECO:0000318"/>
    <property type="project" value="GO_Central"/>
</dbReference>
<dbReference type="GO" id="GO:0060041">
    <property type="term" value="P:retina development in camera-type eye"/>
    <property type="evidence" value="ECO:0000318"/>
    <property type="project" value="GO_Central"/>
</dbReference>
<dbReference type="GO" id="GO:0007423">
    <property type="term" value="P:sensory organ development"/>
    <property type="evidence" value="ECO:0000318"/>
    <property type="project" value="GO_Central"/>
</dbReference>
<dbReference type="GO" id="GO:0003309">
    <property type="term" value="P:type B pancreatic cell differentiation"/>
    <property type="evidence" value="ECO:0000318"/>
    <property type="project" value="GO_Central"/>
</dbReference>
<dbReference type="CDD" id="cd00086">
    <property type="entry name" value="homeodomain"/>
    <property type="match status" value="1"/>
</dbReference>
<dbReference type="CDD" id="cd00131">
    <property type="entry name" value="PAX"/>
    <property type="match status" value="1"/>
</dbReference>
<dbReference type="FunFam" id="1.10.10.10:FF:000003">
    <property type="entry name" value="Paired box protein Pax-6"/>
    <property type="match status" value="1"/>
</dbReference>
<dbReference type="FunFam" id="1.10.10.10:FF:000069">
    <property type="entry name" value="Paired box protein Pax-6"/>
    <property type="match status" value="1"/>
</dbReference>
<dbReference type="FunFam" id="1.10.10.60:FF:000516">
    <property type="entry name" value="Transcription factor Toy"/>
    <property type="match status" value="1"/>
</dbReference>
<dbReference type="Gene3D" id="1.10.10.60">
    <property type="entry name" value="Homeodomain-like"/>
    <property type="match status" value="1"/>
</dbReference>
<dbReference type="Gene3D" id="1.10.10.10">
    <property type="entry name" value="Winged helix-like DNA-binding domain superfamily/Winged helix DNA-binding domain"/>
    <property type="match status" value="2"/>
</dbReference>
<dbReference type="InterPro" id="IPR001356">
    <property type="entry name" value="HD"/>
</dbReference>
<dbReference type="InterPro" id="IPR017970">
    <property type="entry name" value="Homeobox_CS"/>
</dbReference>
<dbReference type="InterPro" id="IPR009057">
    <property type="entry name" value="Homeodomain-like_sf"/>
</dbReference>
<dbReference type="InterPro" id="IPR043182">
    <property type="entry name" value="PAIRED_DNA-bd_dom"/>
</dbReference>
<dbReference type="InterPro" id="IPR001523">
    <property type="entry name" value="Paired_dom"/>
</dbReference>
<dbReference type="InterPro" id="IPR043565">
    <property type="entry name" value="PAX_fam"/>
</dbReference>
<dbReference type="InterPro" id="IPR036388">
    <property type="entry name" value="WH-like_DNA-bd_sf"/>
</dbReference>
<dbReference type="PANTHER" id="PTHR45636:SF44">
    <property type="entry name" value="PAIRED BOX 10-RELATED"/>
    <property type="match status" value="1"/>
</dbReference>
<dbReference type="PANTHER" id="PTHR45636">
    <property type="entry name" value="PAIRED BOX PROTEIN PAX-6-RELATED-RELATED"/>
    <property type="match status" value="1"/>
</dbReference>
<dbReference type="Pfam" id="PF00046">
    <property type="entry name" value="Homeodomain"/>
    <property type="match status" value="1"/>
</dbReference>
<dbReference type="Pfam" id="PF00292">
    <property type="entry name" value="PAX"/>
    <property type="match status" value="1"/>
</dbReference>
<dbReference type="PRINTS" id="PR00027">
    <property type="entry name" value="PAIREDBOX"/>
</dbReference>
<dbReference type="SMART" id="SM00389">
    <property type="entry name" value="HOX"/>
    <property type="match status" value="1"/>
</dbReference>
<dbReference type="SMART" id="SM00351">
    <property type="entry name" value="PAX"/>
    <property type="match status" value="1"/>
</dbReference>
<dbReference type="SUPFAM" id="SSF46689">
    <property type="entry name" value="Homeodomain-like"/>
    <property type="match status" value="2"/>
</dbReference>
<dbReference type="PROSITE" id="PS00027">
    <property type="entry name" value="HOMEOBOX_1"/>
    <property type="match status" value="1"/>
</dbReference>
<dbReference type="PROSITE" id="PS50071">
    <property type="entry name" value="HOMEOBOX_2"/>
    <property type="match status" value="1"/>
</dbReference>
<dbReference type="PROSITE" id="PS00034">
    <property type="entry name" value="PAIRED_1"/>
    <property type="match status" value="1"/>
</dbReference>
<dbReference type="PROSITE" id="PS51057">
    <property type="entry name" value="PAIRED_2"/>
    <property type="match status" value="1"/>
</dbReference>
<comment type="function">
    <text evidence="1">May be a transcription factor with important functions in eye and nasal development.</text>
</comment>
<comment type="subcellular location">
    <subcellularLocation>
        <location>Nucleus</location>
    </subcellularLocation>
</comment>
<comment type="similarity">
    <text evidence="5">Belongs to the paired homeobox family.</text>
</comment>
<evidence type="ECO:0000250" key="1"/>
<evidence type="ECO:0000255" key="2">
    <source>
        <dbReference type="PROSITE-ProRule" id="PRU00108"/>
    </source>
</evidence>
<evidence type="ECO:0000255" key="3">
    <source>
        <dbReference type="PROSITE-ProRule" id="PRU00381"/>
    </source>
</evidence>
<evidence type="ECO:0000256" key="4">
    <source>
        <dbReference type="SAM" id="MobiDB-lite"/>
    </source>
</evidence>
<evidence type="ECO:0000305" key="5"/>
<protein>
    <recommendedName>
        <fullName>Paired box protein Pax-6</fullName>
    </recommendedName>
</protein>
<gene>
    <name type="primary">pax6</name>
</gene>
<keyword id="KW-0217">Developmental protein</keyword>
<keyword id="KW-0238">DNA-binding</keyword>
<keyword id="KW-0371">Homeobox</keyword>
<keyword id="KW-0539">Nucleus</keyword>
<keyword id="KW-0563">Paired box</keyword>
<keyword id="KW-1185">Reference proteome</keyword>
<keyword id="KW-0804">Transcription</keyword>
<keyword id="KW-0805">Transcription regulation</keyword>
<sequence length="437" mass="48525">MPQKEYHNQATWESGVASMMQNSHSGVNQLGGVFVNGRPLPDSTRQKIVELAHSGARPCDISRILQVSNGCVSKILGRYYETGSIRPRAIGGSKPRVATPEVVAKIAQYKRECPSIFAWEIRDRLLSEGICTNDNIPSVSSINRVLRNLASEKQQMGADGMYDKLRMLNGQTGTWGTRPGWYPGTSVPGQPNQDGCQQQDGAGENTNSISSNGEDSEETQMRLQLKRKLQRNRTSFTQEQIEALEKEFERTHYPDVFARERLAAKIDLPEARIQVWFSNRRAKWRREEKLRNQRRQANNSSSHIPISSSFSTSVYQAIPQPTTPVSFTSGSMLGRPDSALTNTYSALPPMPSFTMANNLPMQPSQTSSYSCMLPTSPPVNGRSYETYTPPHMQAHMNSQSMTTSGTTSTGLISPGVSVPVQVPGSEPDMSQYWSRLQ</sequence>
<proteinExistence type="evidence at transcript level"/>
<organism>
    <name type="scientific">Oryzias latipes</name>
    <name type="common">Japanese rice fish</name>
    <name type="synonym">Japanese killifish</name>
    <dbReference type="NCBI Taxonomy" id="8090"/>
    <lineage>
        <taxon>Eukaryota</taxon>
        <taxon>Metazoa</taxon>
        <taxon>Chordata</taxon>
        <taxon>Craniata</taxon>
        <taxon>Vertebrata</taxon>
        <taxon>Euteleostomi</taxon>
        <taxon>Actinopterygii</taxon>
        <taxon>Neopterygii</taxon>
        <taxon>Teleostei</taxon>
        <taxon>Neoteleostei</taxon>
        <taxon>Acanthomorphata</taxon>
        <taxon>Ovalentaria</taxon>
        <taxon>Atherinomorphae</taxon>
        <taxon>Beloniformes</taxon>
        <taxon>Adrianichthyidae</taxon>
        <taxon>Oryziinae</taxon>
        <taxon>Oryzias</taxon>
    </lineage>
</organism>
<feature type="chain" id="PRO_0000050192" description="Paired box protein Pax-6">
    <location>
        <begin position="1"/>
        <end position="437"/>
    </location>
</feature>
<feature type="DNA-binding region" description="Paired" evidence="3">
    <location>
        <begin position="23"/>
        <end position="149"/>
    </location>
</feature>
<feature type="DNA-binding region" description="Homeobox" evidence="2">
    <location>
        <begin position="229"/>
        <end position="288"/>
    </location>
</feature>
<feature type="region of interest" description="PAI subdomain" evidence="3">
    <location>
        <begin position="26"/>
        <end position="82"/>
    </location>
</feature>
<feature type="region of interest" description="RED subdomain" evidence="3">
    <location>
        <begin position="101"/>
        <end position="149"/>
    </location>
</feature>
<feature type="region of interest" description="Disordered" evidence="4">
    <location>
        <begin position="183"/>
        <end position="220"/>
    </location>
</feature>
<feature type="region of interest" description="Disordered" evidence="4">
    <location>
        <begin position="396"/>
        <end position="437"/>
    </location>
</feature>
<feature type="compositionally biased region" description="Polar residues" evidence="4">
    <location>
        <begin position="187"/>
        <end position="213"/>
    </location>
</feature>
<feature type="compositionally biased region" description="Low complexity" evidence="4">
    <location>
        <begin position="402"/>
        <end position="427"/>
    </location>
</feature>
<name>PAX6_ORYLA</name>
<accession>O73917</accession>